<feature type="chain" id="PRO_0000229038" description="Protein yippee-like 5">
    <location>
        <begin position="1"/>
        <end position="121"/>
    </location>
</feature>
<feature type="domain" description="Yippee" evidence="4">
    <location>
        <begin position="13"/>
        <end position="110"/>
    </location>
</feature>
<feature type="binding site" evidence="4">
    <location>
        <position position="17"/>
    </location>
    <ligand>
        <name>Zn(2+)</name>
        <dbReference type="ChEBI" id="CHEBI:29105"/>
    </ligand>
</feature>
<feature type="binding site" evidence="4">
    <location>
        <position position="20"/>
    </location>
    <ligand>
        <name>Zn(2+)</name>
        <dbReference type="ChEBI" id="CHEBI:29105"/>
    </ligand>
</feature>
<feature type="binding site" evidence="4">
    <location>
        <position position="73"/>
    </location>
    <ligand>
        <name>Zn(2+)</name>
        <dbReference type="ChEBI" id="CHEBI:29105"/>
    </ligand>
</feature>
<feature type="binding site" evidence="4">
    <location>
        <position position="76"/>
    </location>
    <ligand>
        <name>Zn(2+)</name>
        <dbReference type="ChEBI" id="CHEBI:29105"/>
    </ligand>
</feature>
<feature type="modified residue" description="Phosphoserine" evidence="2">
    <location>
        <position position="118"/>
    </location>
</feature>
<keyword id="KW-0963">Cytoplasm</keyword>
<keyword id="KW-0206">Cytoskeleton</keyword>
<keyword id="KW-0479">Metal-binding</keyword>
<keyword id="KW-0539">Nucleus</keyword>
<keyword id="KW-0597">Phosphoprotein</keyword>
<keyword id="KW-1185">Reference proteome</keyword>
<keyword id="KW-0862">Zinc</keyword>
<comment type="function">
    <text evidence="1 3">Component of the CTLH E3 ubiquitin-protein ligase complex that selectively accepts ubiquitin from UBE2H and mediates ubiquitination and subsequent proteasomal degradation of the transcription factor HBP1 (By similarity). Required for normal cell proliferation (By similarity).</text>
</comment>
<comment type="subunit">
    <text evidence="1">Identified in the CTLH complex that contains GID4, RANBP9 and/or RANBP10, MKLN1, MAEA, RMND5A (or alternatively its paralog RMND5B), GID8, ARMC8, WDR26 and YPEL5. Within this complex, MAEA, RMND5A (or alternatively its paralog RMND5B), GID8, WDR26, and RANBP9 and/or RANBP10 form the catalytic core, while GID4, MKLN1, ARMC8 and YPEL5 have ancillary roles. Interacts with RANBP9 and RANBP10.</text>
</comment>
<comment type="subcellular location">
    <subcellularLocation>
        <location evidence="3">Nucleus</location>
    </subcellularLocation>
    <subcellularLocation>
        <location evidence="3">Cytoplasm</location>
        <location evidence="3">Cytoskeleton</location>
        <location evidence="3">Microtubule organizing center</location>
        <location evidence="3">Centrosome</location>
    </subcellularLocation>
    <subcellularLocation>
        <location evidence="3">Cytoplasm</location>
        <location evidence="3">Cytoskeleton</location>
        <location evidence="3">Spindle pole</location>
    </subcellularLocation>
    <subcellularLocation>
        <location evidence="3">Midbody</location>
    </subcellularLocation>
    <text evidence="3">Deteted in nucleus and at the centrosome during interphase. During mitosis, detected on the mitotic spindle, at spindle poles and at the midbody.</text>
</comment>
<comment type="similarity">
    <text evidence="5">Belongs to the yippee family.</text>
</comment>
<organism>
    <name type="scientific">Pongo abelii</name>
    <name type="common">Sumatran orangutan</name>
    <name type="synonym">Pongo pygmaeus abelii</name>
    <dbReference type="NCBI Taxonomy" id="9601"/>
    <lineage>
        <taxon>Eukaryota</taxon>
        <taxon>Metazoa</taxon>
        <taxon>Chordata</taxon>
        <taxon>Craniata</taxon>
        <taxon>Vertebrata</taxon>
        <taxon>Euteleostomi</taxon>
        <taxon>Mammalia</taxon>
        <taxon>Eutheria</taxon>
        <taxon>Euarchontoglires</taxon>
        <taxon>Primates</taxon>
        <taxon>Haplorrhini</taxon>
        <taxon>Catarrhini</taxon>
        <taxon>Hominidae</taxon>
        <taxon>Pongo</taxon>
    </lineage>
</organism>
<proteinExistence type="evidence at transcript level"/>
<reference key="1">
    <citation type="submission" date="2004-11" db="EMBL/GenBank/DDBJ databases">
        <authorList>
            <consortium name="The German cDNA consortium"/>
        </authorList>
    </citation>
    <scope>NUCLEOTIDE SEQUENCE [LARGE SCALE MRNA]</scope>
    <source>
        <tissue>Brain cortex</tissue>
    </source>
</reference>
<sequence>MGRIFLDHIGGTRLFSCANCDTILTNRSELISTRFTGATGRAFLFNKVVNLQYSEVQDRVMLTGRHMVRDVSCKNCNSKLGWIYEFATEDSQRYKEGRVILERALVRESEGFEEHVPSDNS</sequence>
<dbReference type="EMBL" id="CR857799">
    <property type="protein sequence ID" value="CAH90060.1"/>
    <property type="molecule type" value="mRNA"/>
</dbReference>
<dbReference type="EMBL" id="CR860597">
    <property type="protein sequence ID" value="CAH92719.1"/>
    <property type="molecule type" value="mRNA"/>
</dbReference>
<dbReference type="RefSeq" id="NP_001126590.1">
    <property type="nucleotide sequence ID" value="NM_001133118.1"/>
</dbReference>
<dbReference type="RefSeq" id="XP_009235688.1">
    <property type="nucleotide sequence ID" value="XM_009237413.4"/>
</dbReference>
<dbReference type="RefSeq" id="XP_009235689.1">
    <property type="nucleotide sequence ID" value="XM_009237414.4"/>
</dbReference>
<dbReference type="RefSeq" id="XP_009235690.1">
    <property type="nucleotide sequence ID" value="XM_009237415.4"/>
</dbReference>
<dbReference type="RefSeq" id="XP_054402154.1">
    <property type="nucleotide sequence ID" value="XM_054546179.2"/>
</dbReference>
<dbReference type="RefSeq" id="XP_054402157.1">
    <property type="nucleotide sequence ID" value="XM_054546182.2"/>
</dbReference>
<dbReference type="RefSeq" id="XP_054402160.1">
    <property type="nucleotide sequence ID" value="XM_054546185.2"/>
</dbReference>
<dbReference type="RefSeq" id="XP_063569321.1">
    <property type="nucleotide sequence ID" value="XM_063713251.1"/>
</dbReference>
<dbReference type="SMR" id="Q5RDU7"/>
<dbReference type="FunCoup" id="Q5RDU7">
    <property type="interactions" value="1749"/>
</dbReference>
<dbReference type="STRING" id="9601.ENSPPYP00000013986"/>
<dbReference type="Ensembl" id="ENSPPYT00000050514.1">
    <property type="protein sequence ID" value="ENSPPYP00000037045.1"/>
    <property type="gene ID" value="ENSPPYG00000039081.1"/>
</dbReference>
<dbReference type="GeneID" id="100173582"/>
<dbReference type="KEGG" id="pon:100173582"/>
<dbReference type="CTD" id="51646"/>
<dbReference type="eggNOG" id="KOG3399">
    <property type="taxonomic scope" value="Eukaryota"/>
</dbReference>
<dbReference type="GeneTree" id="ENSGT00940000154800"/>
<dbReference type="HOGENOM" id="CLU_043857_1_1_1"/>
<dbReference type="InParanoid" id="Q5RDU7"/>
<dbReference type="OMA" id="YNCAACE"/>
<dbReference type="OrthoDB" id="6407410at2759"/>
<dbReference type="TreeFam" id="TF323378"/>
<dbReference type="Proteomes" id="UP000001595">
    <property type="component" value="Chromosome 2A"/>
</dbReference>
<dbReference type="GO" id="GO:0005813">
    <property type="term" value="C:centrosome"/>
    <property type="evidence" value="ECO:0007669"/>
    <property type="project" value="UniProtKB-SubCell"/>
</dbReference>
<dbReference type="GO" id="GO:0005737">
    <property type="term" value="C:cytoplasm"/>
    <property type="evidence" value="ECO:0007669"/>
    <property type="project" value="UniProtKB-KW"/>
</dbReference>
<dbReference type="GO" id="GO:0030496">
    <property type="term" value="C:midbody"/>
    <property type="evidence" value="ECO:0000250"/>
    <property type="project" value="UniProtKB"/>
</dbReference>
<dbReference type="GO" id="GO:0097431">
    <property type="term" value="C:mitotic spindle pole"/>
    <property type="evidence" value="ECO:0000250"/>
    <property type="project" value="UniProtKB"/>
</dbReference>
<dbReference type="GO" id="GO:0005634">
    <property type="term" value="C:nucleus"/>
    <property type="evidence" value="ECO:0000250"/>
    <property type="project" value="UniProtKB"/>
</dbReference>
<dbReference type="GO" id="GO:0000151">
    <property type="term" value="C:ubiquitin ligase complex"/>
    <property type="evidence" value="ECO:0007669"/>
    <property type="project" value="Ensembl"/>
</dbReference>
<dbReference type="GO" id="GO:0046872">
    <property type="term" value="F:metal ion binding"/>
    <property type="evidence" value="ECO:0007669"/>
    <property type="project" value="UniProtKB-KW"/>
</dbReference>
<dbReference type="GO" id="GO:0008283">
    <property type="term" value="P:cell population proliferation"/>
    <property type="evidence" value="ECO:0000250"/>
    <property type="project" value="UniProtKB"/>
</dbReference>
<dbReference type="InterPro" id="IPR034751">
    <property type="entry name" value="Yippee"/>
</dbReference>
<dbReference type="InterPro" id="IPR004910">
    <property type="entry name" value="Yippee/Mis18/Cereblon"/>
</dbReference>
<dbReference type="InterPro" id="IPR039058">
    <property type="entry name" value="Yippee_fam"/>
</dbReference>
<dbReference type="PANTHER" id="PTHR13848">
    <property type="entry name" value="PROTEIN YIPPEE-LIKE CG15309-RELATED"/>
    <property type="match status" value="1"/>
</dbReference>
<dbReference type="Pfam" id="PF03226">
    <property type="entry name" value="Yippee-Mis18"/>
    <property type="match status" value="1"/>
</dbReference>
<dbReference type="PROSITE" id="PS51792">
    <property type="entry name" value="YIPPEE"/>
    <property type="match status" value="1"/>
</dbReference>
<gene>
    <name type="primary">YPEL5</name>
</gene>
<protein>
    <recommendedName>
        <fullName>Protein yippee-like 5</fullName>
    </recommendedName>
</protein>
<evidence type="ECO:0000250" key="1">
    <source>
        <dbReference type="UniProtKB" id="P62699"/>
    </source>
</evidence>
<evidence type="ECO:0000250" key="2">
    <source>
        <dbReference type="UniProtKB" id="P62700"/>
    </source>
</evidence>
<evidence type="ECO:0000250" key="3">
    <source>
        <dbReference type="UniProtKB" id="Q65Z55"/>
    </source>
</evidence>
<evidence type="ECO:0000255" key="4">
    <source>
        <dbReference type="PROSITE-ProRule" id="PRU01128"/>
    </source>
</evidence>
<evidence type="ECO:0000305" key="5"/>
<name>YPEL5_PONAB</name>
<accession>Q5RDU7</accession>